<evidence type="ECO:0000255" key="1">
    <source>
        <dbReference type="HAMAP-Rule" id="MF_01694"/>
    </source>
</evidence>
<evidence type="ECO:0000255" key="2">
    <source>
        <dbReference type="PROSITE-ProRule" id="PRU01266"/>
    </source>
</evidence>
<proteinExistence type="inferred from homology"/>
<feature type="chain" id="PRO_0000381569" description="Biotin synthase">
    <location>
        <begin position="1"/>
        <end position="376"/>
    </location>
</feature>
<feature type="domain" description="Radical SAM core" evidence="2">
    <location>
        <begin position="68"/>
        <end position="292"/>
    </location>
</feature>
<feature type="binding site" evidence="1">
    <location>
        <position position="83"/>
    </location>
    <ligand>
        <name>[4Fe-4S] cluster</name>
        <dbReference type="ChEBI" id="CHEBI:49883"/>
        <note>4Fe-4S-S-AdoMet</note>
    </ligand>
</feature>
<feature type="binding site" evidence="1">
    <location>
        <position position="87"/>
    </location>
    <ligand>
        <name>[4Fe-4S] cluster</name>
        <dbReference type="ChEBI" id="CHEBI:49883"/>
        <note>4Fe-4S-S-AdoMet</note>
    </ligand>
</feature>
<feature type="binding site" evidence="1">
    <location>
        <position position="90"/>
    </location>
    <ligand>
        <name>[4Fe-4S] cluster</name>
        <dbReference type="ChEBI" id="CHEBI:49883"/>
        <note>4Fe-4S-S-AdoMet</note>
    </ligand>
</feature>
<feature type="binding site" evidence="1">
    <location>
        <position position="129"/>
    </location>
    <ligand>
        <name>[2Fe-2S] cluster</name>
        <dbReference type="ChEBI" id="CHEBI:190135"/>
    </ligand>
</feature>
<feature type="binding site" evidence="1">
    <location>
        <position position="160"/>
    </location>
    <ligand>
        <name>[2Fe-2S] cluster</name>
        <dbReference type="ChEBI" id="CHEBI:190135"/>
    </ligand>
</feature>
<feature type="binding site" evidence="1">
    <location>
        <position position="220"/>
    </location>
    <ligand>
        <name>[2Fe-2S] cluster</name>
        <dbReference type="ChEBI" id="CHEBI:190135"/>
    </ligand>
</feature>
<feature type="binding site" evidence="1">
    <location>
        <position position="296"/>
    </location>
    <ligand>
        <name>[2Fe-2S] cluster</name>
        <dbReference type="ChEBI" id="CHEBI:190135"/>
    </ligand>
</feature>
<sequence>MSALLNITEPNNNTNSNDNDFLASLTTDAPQAIASKYSREQIAQLFDLPLMDLLLQAQTIHRQNFNANEVQISTLLSIKTGNCPEDCGYCSQSGHHRDKTKLVAEKRIEVDKVIAAAKRAKATGSSRFCMGAAWKHPSAKDMPYVVELVKEVKALGLETCMTLGMLDTDQAAQLADAGLDYYNHNLDTSRSYYEQVVSTRSYDERLDTITNVRNSGINVCSGNIVGMGESRDDRIDWVHELLKMPKAPESIPVNLLVPIQGTPIGDKVLAEGQLSVLEWIRTIAVTRICCPSSYVRLSAGRESLSDAEQALAFMAGANSFFYGDKLLTTGNASQSGDDRLMRELGLTKQFAAPRAPKQVPVIDAMSGHQSQVVLAS</sequence>
<keyword id="KW-0001">2Fe-2S</keyword>
<keyword id="KW-0004">4Fe-4S</keyword>
<keyword id="KW-0093">Biotin biosynthesis</keyword>
<keyword id="KW-0408">Iron</keyword>
<keyword id="KW-0411">Iron-sulfur</keyword>
<keyword id="KW-0479">Metal-binding</keyword>
<keyword id="KW-0949">S-adenosyl-L-methionine</keyword>
<keyword id="KW-0808">Transferase</keyword>
<organism>
    <name type="scientific">Psychrobacter cryohalolentis (strain ATCC BAA-1226 / DSM 17306 / VKM B-2378 / K5)</name>
    <dbReference type="NCBI Taxonomy" id="335284"/>
    <lineage>
        <taxon>Bacteria</taxon>
        <taxon>Pseudomonadati</taxon>
        <taxon>Pseudomonadota</taxon>
        <taxon>Gammaproteobacteria</taxon>
        <taxon>Moraxellales</taxon>
        <taxon>Moraxellaceae</taxon>
        <taxon>Psychrobacter</taxon>
    </lineage>
</organism>
<dbReference type="EC" id="2.8.1.6" evidence="1"/>
<dbReference type="EMBL" id="CP000323">
    <property type="protein sequence ID" value="ABE75927.1"/>
    <property type="molecule type" value="Genomic_DNA"/>
</dbReference>
<dbReference type="RefSeq" id="WP_011514463.1">
    <property type="nucleotide sequence ID" value="NC_007969.1"/>
</dbReference>
<dbReference type="SMR" id="Q1Q8S6"/>
<dbReference type="STRING" id="335284.Pcryo_2150"/>
<dbReference type="KEGG" id="pcr:Pcryo_2150"/>
<dbReference type="eggNOG" id="COG0502">
    <property type="taxonomic scope" value="Bacteria"/>
</dbReference>
<dbReference type="HOGENOM" id="CLU_033172_1_2_6"/>
<dbReference type="UniPathway" id="UPA00078">
    <property type="reaction ID" value="UER00162"/>
</dbReference>
<dbReference type="Proteomes" id="UP000002425">
    <property type="component" value="Chromosome"/>
</dbReference>
<dbReference type="GO" id="GO:0051537">
    <property type="term" value="F:2 iron, 2 sulfur cluster binding"/>
    <property type="evidence" value="ECO:0007669"/>
    <property type="project" value="UniProtKB-KW"/>
</dbReference>
<dbReference type="GO" id="GO:0051539">
    <property type="term" value="F:4 iron, 4 sulfur cluster binding"/>
    <property type="evidence" value="ECO:0007669"/>
    <property type="project" value="UniProtKB-KW"/>
</dbReference>
<dbReference type="GO" id="GO:0004076">
    <property type="term" value="F:biotin synthase activity"/>
    <property type="evidence" value="ECO:0007669"/>
    <property type="project" value="UniProtKB-UniRule"/>
</dbReference>
<dbReference type="GO" id="GO:0005506">
    <property type="term" value="F:iron ion binding"/>
    <property type="evidence" value="ECO:0007669"/>
    <property type="project" value="UniProtKB-UniRule"/>
</dbReference>
<dbReference type="GO" id="GO:0009102">
    <property type="term" value="P:biotin biosynthetic process"/>
    <property type="evidence" value="ECO:0007669"/>
    <property type="project" value="UniProtKB-UniRule"/>
</dbReference>
<dbReference type="CDD" id="cd01335">
    <property type="entry name" value="Radical_SAM"/>
    <property type="match status" value="1"/>
</dbReference>
<dbReference type="Gene3D" id="3.20.20.70">
    <property type="entry name" value="Aldolase class I"/>
    <property type="match status" value="1"/>
</dbReference>
<dbReference type="HAMAP" id="MF_01694">
    <property type="entry name" value="BioB"/>
    <property type="match status" value="1"/>
</dbReference>
<dbReference type="InterPro" id="IPR013785">
    <property type="entry name" value="Aldolase_TIM"/>
</dbReference>
<dbReference type="InterPro" id="IPR010722">
    <property type="entry name" value="BATS_dom"/>
</dbReference>
<dbReference type="InterPro" id="IPR002684">
    <property type="entry name" value="Biotin_synth/BioAB"/>
</dbReference>
<dbReference type="InterPro" id="IPR024177">
    <property type="entry name" value="Biotin_synthase"/>
</dbReference>
<dbReference type="InterPro" id="IPR006638">
    <property type="entry name" value="Elp3/MiaA/NifB-like_rSAM"/>
</dbReference>
<dbReference type="InterPro" id="IPR007197">
    <property type="entry name" value="rSAM"/>
</dbReference>
<dbReference type="NCBIfam" id="TIGR00433">
    <property type="entry name" value="bioB"/>
    <property type="match status" value="1"/>
</dbReference>
<dbReference type="PANTHER" id="PTHR22976">
    <property type="entry name" value="BIOTIN SYNTHASE"/>
    <property type="match status" value="1"/>
</dbReference>
<dbReference type="PANTHER" id="PTHR22976:SF2">
    <property type="entry name" value="BIOTIN SYNTHASE, MITOCHONDRIAL"/>
    <property type="match status" value="1"/>
</dbReference>
<dbReference type="Pfam" id="PF06968">
    <property type="entry name" value="BATS"/>
    <property type="match status" value="1"/>
</dbReference>
<dbReference type="Pfam" id="PF04055">
    <property type="entry name" value="Radical_SAM"/>
    <property type="match status" value="1"/>
</dbReference>
<dbReference type="PIRSF" id="PIRSF001619">
    <property type="entry name" value="Biotin_synth"/>
    <property type="match status" value="1"/>
</dbReference>
<dbReference type="SFLD" id="SFLDG01060">
    <property type="entry name" value="BATS_domain_containing"/>
    <property type="match status" value="1"/>
</dbReference>
<dbReference type="SFLD" id="SFLDF00272">
    <property type="entry name" value="biotin_synthase"/>
    <property type="match status" value="1"/>
</dbReference>
<dbReference type="SMART" id="SM00876">
    <property type="entry name" value="BATS"/>
    <property type="match status" value="1"/>
</dbReference>
<dbReference type="SMART" id="SM00729">
    <property type="entry name" value="Elp3"/>
    <property type="match status" value="1"/>
</dbReference>
<dbReference type="SUPFAM" id="SSF102114">
    <property type="entry name" value="Radical SAM enzymes"/>
    <property type="match status" value="1"/>
</dbReference>
<dbReference type="PROSITE" id="PS51918">
    <property type="entry name" value="RADICAL_SAM"/>
    <property type="match status" value="1"/>
</dbReference>
<name>BIOB_PSYCK</name>
<protein>
    <recommendedName>
        <fullName evidence="1">Biotin synthase</fullName>
        <ecNumber evidence="1">2.8.1.6</ecNumber>
    </recommendedName>
</protein>
<comment type="function">
    <text evidence="1">Catalyzes the conversion of dethiobiotin (DTB) to biotin by the insertion of a sulfur atom into dethiobiotin via a radical-based mechanism.</text>
</comment>
<comment type="catalytic activity">
    <reaction evidence="1">
        <text>(4R,5S)-dethiobiotin + (sulfur carrier)-SH + 2 reduced [2Fe-2S]-[ferredoxin] + 2 S-adenosyl-L-methionine = (sulfur carrier)-H + biotin + 2 5'-deoxyadenosine + 2 L-methionine + 2 oxidized [2Fe-2S]-[ferredoxin]</text>
        <dbReference type="Rhea" id="RHEA:22060"/>
        <dbReference type="Rhea" id="RHEA-COMP:10000"/>
        <dbReference type="Rhea" id="RHEA-COMP:10001"/>
        <dbReference type="Rhea" id="RHEA-COMP:14737"/>
        <dbReference type="Rhea" id="RHEA-COMP:14739"/>
        <dbReference type="ChEBI" id="CHEBI:17319"/>
        <dbReference type="ChEBI" id="CHEBI:29917"/>
        <dbReference type="ChEBI" id="CHEBI:33737"/>
        <dbReference type="ChEBI" id="CHEBI:33738"/>
        <dbReference type="ChEBI" id="CHEBI:57586"/>
        <dbReference type="ChEBI" id="CHEBI:57844"/>
        <dbReference type="ChEBI" id="CHEBI:59789"/>
        <dbReference type="ChEBI" id="CHEBI:64428"/>
        <dbReference type="ChEBI" id="CHEBI:149473"/>
        <dbReference type="EC" id="2.8.1.6"/>
    </reaction>
</comment>
<comment type="cofactor">
    <cofactor evidence="1">
        <name>[4Fe-4S] cluster</name>
        <dbReference type="ChEBI" id="CHEBI:49883"/>
    </cofactor>
    <text evidence="1">Binds 1 [4Fe-4S] cluster. The cluster is coordinated with 3 cysteines and an exchangeable S-adenosyl-L-methionine.</text>
</comment>
<comment type="cofactor">
    <cofactor evidence="1">
        <name>[2Fe-2S] cluster</name>
        <dbReference type="ChEBI" id="CHEBI:190135"/>
    </cofactor>
    <text evidence="1">Binds 1 [2Fe-2S] cluster. The cluster is coordinated with 3 cysteines and 1 arginine.</text>
</comment>
<comment type="pathway">
    <text evidence="1">Cofactor biosynthesis; biotin biosynthesis; biotin from 7,8-diaminononanoate: step 2/2.</text>
</comment>
<comment type="subunit">
    <text evidence="1">Homodimer.</text>
</comment>
<comment type="similarity">
    <text evidence="1">Belongs to the radical SAM superfamily. Biotin synthase family.</text>
</comment>
<gene>
    <name evidence="1" type="primary">bioB</name>
    <name type="ordered locus">Pcryo_2150</name>
</gene>
<reference key="1">
    <citation type="submission" date="2006-03" db="EMBL/GenBank/DDBJ databases">
        <title>Complete sequence of chromosome of Psychrobacter cryohalolentis K5.</title>
        <authorList>
            <consortium name="US DOE Joint Genome Institute"/>
            <person name="Copeland A."/>
            <person name="Lucas S."/>
            <person name="Lapidus A."/>
            <person name="Barry K."/>
            <person name="Detter J.C."/>
            <person name="Glavina T."/>
            <person name="Hammon N."/>
            <person name="Israni S."/>
            <person name="Dalin E."/>
            <person name="Tice H."/>
            <person name="Pitluck S."/>
            <person name="Brettin T."/>
            <person name="Bruce D."/>
            <person name="Han C."/>
            <person name="Tapia R."/>
            <person name="Sims D.R."/>
            <person name="Gilna P."/>
            <person name="Schmutz J."/>
            <person name="Larimer F."/>
            <person name="Land M."/>
            <person name="Hauser L."/>
            <person name="Kyrpides N."/>
            <person name="Kim E."/>
            <person name="Richardson P."/>
        </authorList>
    </citation>
    <scope>NUCLEOTIDE SEQUENCE [LARGE SCALE GENOMIC DNA]</scope>
    <source>
        <strain>ATCC BAA-1226 / DSM 17306 / VKM B-2378 / K5</strain>
    </source>
</reference>
<accession>Q1Q8S6</accession>